<keyword id="KW-1003">Cell membrane</keyword>
<keyword id="KW-1015">Disulfide bond</keyword>
<keyword id="KW-0297">G-protein coupled receptor</keyword>
<keyword id="KW-0325">Glycoprotein</keyword>
<keyword id="KW-0449">Lipoprotein</keyword>
<keyword id="KW-0472">Membrane</keyword>
<keyword id="KW-0564">Palmitate</keyword>
<keyword id="KW-0675">Receptor</keyword>
<keyword id="KW-1185">Reference proteome</keyword>
<keyword id="KW-0807">Transducer</keyword>
<keyword id="KW-0812">Transmembrane</keyword>
<keyword id="KW-1133">Transmembrane helix</keyword>
<organism>
    <name type="scientific">Mesocricetus auratus</name>
    <name type="common">Golden hamster</name>
    <dbReference type="NCBI Taxonomy" id="10036"/>
    <lineage>
        <taxon>Eukaryota</taxon>
        <taxon>Metazoa</taxon>
        <taxon>Chordata</taxon>
        <taxon>Craniata</taxon>
        <taxon>Vertebrata</taxon>
        <taxon>Euteleostomi</taxon>
        <taxon>Mammalia</taxon>
        <taxon>Eutheria</taxon>
        <taxon>Euarchontoglires</taxon>
        <taxon>Glires</taxon>
        <taxon>Rodentia</taxon>
        <taxon>Myomorpha</taxon>
        <taxon>Muroidea</taxon>
        <taxon>Cricetidae</taxon>
        <taxon>Cricetinae</taxon>
        <taxon>Mesocricetus</taxon>
    </lineage>
</organism>
<comment type="function">
    <text>This is a receptor for the tachykinin neuropeptide substance K (neurokinin A). It is associated with G proteins that activate a phosphatidylinositol-calcium second messenger system. The rank order of affinity of this receptor to tachykinins is: substance K &gt; neuromedin-K &gt; substance P.</text>
</comment>
<comment type="subcellular location">
    <subcellularLocation>
        <location>Cell membrane</location>
        <topology>Multi-pass membrane protein</topology>
    </subcellularLocation>
</comment>
<comment type="similarity">
    <text evidence="2">Belongs to the G-protein coupled receptor 1 family.</text>
</comment>
<reference key="1">
    <citation type="journal article" date="1994" name="Mol. Pharmacol.">
        <title>Isolation and pharmacological characterization of a hamster urinary bladder neurokinin A receptor cDNA.</title>
        <authorList>
            <person name="Aharony D."/>
            <person name="Little J."/>
            <person name="Thomas C."/>
            <person name="Powell S."/>
            <person name="Berry D."/>
            <person name="Graham A."/>
        </authorList>
    </citation>
    <scope>NUCLEOTIDE SEQUENCE [MRNA]</scope>
    <source>
        <tissue>Urinary bladder</tissue>
    </source>
</reference>
<dbReference type="EMBL" id="S68899">
    <property type="protein sequence ID" value="AAC60680.1"/>
    <property type="molecule type" value="mRNA"/>
</dbReference>
<dbReference type="RefSeq" id="XP_005070883.1">
    <property type="nucleotide sequence ID" value="XM_005070826.2"/>
</dbReference>
<dbReference type="SMR" id="P51144"/>
<dbReference type="STRING" id="10036.ENSMAUP00000006242"/>
<dbReference type="BindingDB" id="P51144"/>
<dbReference type="ChEMBL" id="CHEMBL2304405"/>
<dbReference type="GlyCosmos" id="P51144">
    <property type="glycosylation" value="1 site, No reported glycans"/>
</dbReference>
<dbReference type="Ensembl" id="ENSMAUT00000010042">
    <property type="protein sequence ID" value="ENSMAUP00000006242"/>
    <property type="gene ID" value="ENSMAUG00000008248"/>
</dbReference>
<dbReference type="GeneID" id="101839819"/>
<dbReference type="KEGG" id="maua:101839819"/>
<dbReference type="CTD" id="6865"/>
<dbReference type="eggNOG" id="KOG4219">
    <property type="taxonomic scope" value="Eukaryota"/>
</dbReference>
<dbReference type="OrthoDB" id="5981855at2759"/>
<dbReference type="Proteomes" id="UP000189706">
    <property type="component" value="Unplaced"/>
</dbReference>
<dbReference type="GO" id="GO:0005886">
    <property type="term" value="C:plasma membrane"/>
    <property type="evidence" value="ECO:0007669"/>
    <property type="project" value="UniProtKB-SubCell"/>
</dbReference>
<dbReference type="GO" id="GO:0061827">
    <property type="term" value="C:sperm head"/>
    <property type="evidence" value="ECO:0007669"/>
    <property type="project" value="Ensembl"/>
</dbReference>
<dbReference type="GO" id="GO:0097225">
    <property type="term" value="C:sperm midpiece"/>
    <property type="evidence" value="ECO:0007669"/>
    <property type="project" value="Ensembl"/>
</dbReference>
<dbReference type="GO" id="GO:0016497">
    <property type="term" value="F:substance K receptor activity"/>
    <property type="evidence" value="ECO:0007669"/>
    <property type="project" value="TreeGrafter"/>
</dbReference>
<dbReference type="GO" id="GO:1902093">
    <property type="term" value="P:positive regulation of flagellated sperm motility"/>
    <property type="evidence" value="ECO:0007669"/>
    <property type="project" value="Ensembl"/>
</dbReference>
<dbReference type="GO" id="GO:0070472">
    <property type="term" value="P:regulation of uterine smooth muscle contraction"/>
    <property type="evidence" value="ECO:0007669"/>
    <property type="project" value="Ensembl"/>
</dbReference>
<dbReference type="CDD" id="cd16004">
    <property type="entry name" value="7tmA_SKR_NK2R"/>
    <property type="match status" value="1"/>
</dbReference>
<dbReference type="FunFam" id="1.20.1070.10:FF:000224">
    <property type="entry name" value="Tachykinin receptor 2"/>
    <property type="match status" value="1"/>
</dbReference>
<dbReference type="Gene3D" id="1.20.1070.10">
    <property type="entry name" value="Rhodopsin 7-helix transmembrane proteins"/>
    <property type="match status" value="1"/>
</dbReference>
<dbReference type="InterPro" id="IPR000276">
    <property type="entry name" value="GPCR_Rhodpsn"/>
</dbReference>
<dbReference type="InterPro" id="IPR017452">
    <property type="entry name" value="GPCR_Rhodpsn_7TM"/>
</dbReference>
<dbReference type="InterPro" id="IPR001681">
    <property type="entry name" value="Neurokn_rcpt"/>
</dbReference>
<dbReference type="InterPro" id="IPR000913">
    <property type="entry name" value="NK2_rcpt"/>
</dbReference>
<dbReference type="PANTHER" id="PTHR46925">
    <property type="entry name" value="G-PROTEIN COUPLED RECEPTOR TKR-1-RELATED"/>
    <property type="match status" value="1"/>
</dbReference>
<dbReference type="PANTHER" id="PTHR46925:SF3">
    <property type="entry name" value="SUBSTANCE-K RECEPTOR"/>
    <property type="match status" value="1"/>
</dbReference>
<dbReference type="Pfam" id="PF00001">
    <property type="entry name" value="7tm_1"/>
    <property type="match status" value="1"/>
</dbReference>
<dbReference type="PRINTS" id="PR00237">
    <property type="entry name" value="GPCRRHODOPSN"/>
</dbReference>
<dbReference type="PRINTS" id="PR01025">
    <property type="entry name" value="NEUROKININ2R"/>
</dbReference>
<dbReference type="PRINTS" id="PR00244">
    <property type="entry name" value="NEUROKININR"/>
</dbReference>
<dbReference type="SUPFAM" id="SSF81321">
    <property type="entry name" value="Family A G protein-coupled receptor-like"/>
    <property type="match status" value="1"/>
</dbReference>
<dbReference type="PROSITE" id="PS00237">
    <property type="entry name" value="G_PROTEIN_RECEP_F1_1"/>
    <property type="match status" value="1"/>
</dbReference>
<dbReference type="PROSITE" id="PS50262">
    <property type="entry name" value="G_PROTEIN_RECEP_F1_2"/>
    <property type="match status" value="1"/>
</dbReference>
<proteinExistence type="evidence at transcript level"/>
<evidence type="ECO:0000255" key="1"/>
<evidence type="ECO:0000255" key="2">
    <source>
        <dbReference type="PROSITE-ProRule" id="PRU00521"/>
    </source>
</evidence>
<protein>
    <recommendedName>
        <fullName>Substance-K receptor</fullName>
        <shortName>SKR</shortName>
    </recommendedName>
    <alternativeName>
        <fullName>NK-2 receptor</fullName>
        <shortName>NK-2R</shortName>
    </alternativeName>
    <alternativeName>
        <fullName>Neurokinin A receptor</fullName>
    </alternativeName>
    <alternativeName>
        <fullName>Tachykinin receptor 2</fullName>
    </alternativeName>
</protein>
<feature type="chain" id="PRO_0000069894" description="Substance-K receptor">
    <location>
        <begin position="1"/>
        <end position="384"/>
    </location>
</feature>
<feature type="topological domain" description="Extracellular" evidence="1">
    <location>
        <begin position="1"/>
        <end position="32"/>
    </location>
</feature>
<feature type="transmembrane region" description="Helical; Name=1" evidence="1">
    <location>
        <begin position="33"/>
        <end position="56"/>
    </location>
</feature>
<feature type="topological domain" description="Cytoplasmic" evidence="1">
    <location>
        <begin position="57"/>
        <end position="69"/>
    </location>
</feature>
<feature type="transmembrane region" description="Helical; Name=2" evidence="1">
    <location>
        <begin position="70"/>
        <end position="90"/>
    </location>
</feature>
<feature type="topological domain" description="Extracellular" evidence="1">
    <location>
        <begin position="91"/>
        <end position="107"/>
    </location>
</feature>
<feature type="transmembrane region" description="Helical; Name=3" evidence="1">
    <location>
        <begin position="108"/>
        <end position="129"/>
    </location>
</feature>
<feature type="topological domain" description="Cytoplasmic" evidence="1">
    <location>
        <begin position="130"/>
        <end position="149"/>
    </location>
</feature>
<feature type="transmembrane region" description="Helical; Name=4" evidence="1">
    <location>
        <begin position="150"/>
        <end position="170"/>
    </location>
</feature>
<feature type="topological domain" description="Extracellular" evidence="1">
    <location>
        <begin position="171"/>
        <end position="196"/>
    </location>
</feature>
<feature type="transmembrane region" description="Helical; Name=5" evidence="1">
    <location>
        <begin position="197"/>
        <end position="218"/>
    </location>
</feature>
<feature type="topological domain" description="Cytoplasmic" evidence="1">
    <location>
        <begin position="219"/>
        <end position="251"/>
    </location>
</feature>
<feature type="transmembrane region" description="Helical; Name=6" evidence="1">
    <location>
        <begin position="252"/>
        <end position="272"/>
    </location>
</feature>
<feature type="topological domain" description="Extracellular" evidence="1">
    <location>
        <begin position="273"/>
        <end position="290"/>
    </location>
</feature>
<feature type="transmembrane region" description="Helical; Name=7" evidence="1">
    <location>
        <begin position="291"/>
        <end position="310"/>
    </location>
</feature>
<feature type="topological domain" description="Cytoplasmic" evidence="1">
    <location>
        <begin position="311"/>
        <end position="384"/>
    </location>
</feature>
<feature type="lipid moiety-binding region" description="S-palmitoyl cysteine" evidence="1">
    <location>
        <position position="324"/>
    </location>
</feature>
<feature type="glycosylation site" description="N-linked (GlcNAc...) asparagine" evidence="1">
    <location>
        <position position="19"/>
    </location>
</feature>
<feature type="disulfide bond" evidence="2">
    <location>
        <begin position="106"/>
        <end position="181"/>
    </location>
</feature>
<sequence length="384" mass="43418">MGGRAIVTDTNIFSGLESNTTGVTAFSMPAWQLALWATAYLGLVLVAVTGNATVIWIILAHERMRTVTNYFIINLALADLCMAAFNATFNFVYASHNIWYFGRAFCYFQNLFPITAMFVSIYSMTAIAADRYMAIVHPFQPRLSAPITKATIAGIWLVALALASPQCFYSTITVDQGATKCVVAWPNDNGGKMLLLYHLVVFVLVYFLPLVVMFVAYSVIGLTLWKRAVPRHQAHGANLRHLHAKKKFVKAMVLVVLTFAICWLPYHLYFILGSFQKDIYYRKFIQQVYLALFWLAMSSTMYNPIIYCCLNHRFRSGFRLAFRCCPWVTPTEEDRLELTRTPSLSRRVNRCHTKETLFMTADMTHSEATNGQVGSPQDVEPAAP</sequence>
<accession>P51144</accession>
<gene>
    <name type="primary">TACR2</name>
    <name type="synonym">TAC2R</name>
</gene>
<name>NK2R_MESAU</name>